<sequence length="1387" mass="158823">MNISSMLSSDNNVSLKESMTTATDQQQQQQAESVDHASINGNGQTSVSAVNNVQENHLSEFHSSNQQHSSIPPVGTTVEHATTTTTTATNHQPVNSSPLKHSVDENSNPTTISSLKKDTNSIIASILPESYQFDNSYTPTIDQKYKSVFESNINVINQLDQYQQMGHHLKLMKFDEVKLNNYLINTGQFASNYIDRVVAEDISSRNNKISETNKNKELIAIDYSKPLHHNSTRGKEFKWGSTRKIHKVEHKSRRRKPAATTSTTDDSNKAVAAAANGTKDHSATAGTTASANGSDTPDRRHQRQSSKPSTPILIKPKTEPGKGSPEIQPRRSSRPKVKRKAFEDELETADKQSSTQQVKKSQESTGRDHKRVKIENKQEEQQQHQQQQQADEEDEAEAEAEAEQKPKSGALSEAAAAGMTAKEFKAFMRQYDNTYIAIWKDLSRKDGPKGSRSMQQATQGRLINLRKTALLAAREAKRWQLKNTKNQKDLTTKARRAMREMFNFWKRNERLERDLKKKHEKELLDKAKKEEEEREAKRQSRKLNFLITQTELYSHFIGKKIKTDELEGTNADDNLKSNTKEHLDKYADVDGSATHDINAVDFDNDDEEALRRMAAQNAQNALIEVQNKAKQFDNSEESFKNPDTNGEEMNFQNPTLLGDITIPQPNMLKCTLKEYQLKGLNWLANLYEQGINGILADEMGLGKTVQSISVLAYLAETYNMWGPFLVVTPASTLHNWQQEITKFVPEFKVLPYWGNAKDRKILRKFWDRKSLRYDKDSPFHVLVTSYQLIVADIAYFQKMKWQYMILDEAQAIKSSSSSRWKSLLNLTCRNRLLLTGTPIQNSMQELWALLHFIMPSIFDSHDEFSDWFAKDIESHAQSNTSLDEQQLRRLHMILKPFMLRRIKKNVQSELGDKVEIDVYCDLTTRQKKLYQQLRSQISMSDTDLLELESNSTSSDSSLANLVMQFRKVCNHPDLFERADVNSPFSFGKFAETGSFLRETNELDVNYSTENIVQYDLPRLIYDELLTPNYNKSIRDSIYSKFSIYNPENMNATGWLQGINVSPNELKHYSQMDILSRAIEMQNKPTETEKLERINYLYEGDYIPKNKKLLITDHSTSTNSSFISNSLVFSDLVSIKEKVGEDMYLNKLEPAVTPIASAPPITVNCSSMNFTNKMNNTLFDSNIRSSLIPLSLSTELKLMKDQIPLEQYPKSNMLPMPIFDYSNIRMPSMDRFIAESGKLAKLDELLIDLKRGGHRILIYFQMTRMMQIFEEYLAYKSYKYIRLDGSTTIESRREMVQAWQTNPEIFIFMLSTRAGGLGLNLTSADTVIFYDSDWNPTIDSQAMDRAHRIGQTKQVKVFRLVTRNTIEQKILERAKEKEEIQKLVVGNM</sequence>
<gene>
    <name type="primary">INO80</name>
    <name type="ordered locus">CAALFM_CR04720CA</name>
    <name type="ORF">CaO19.1734</name>
    <name type="ORF">CaO19.9302</name>
</gene>
<feature type="chain" id="PRO_0000074320" description="Chromatin-remodeling ATPase INO80">
    <location>
        <begin position="1"/>
        <end position="1387"/>
    </location>
</feature>
<feature type="domain" description="DBINO" evidence="6">
    <location>
        <begin position="438"/>
        <end position="563"/>
    </location>
</feature>
<feature type="domain" description="Helicase ATP-binding" evidence="4">
    <location>
        <begin position="684"/>
        <end position="856"/>
    </location>
</feature>
<feature type="domain" description="Helicase C-terminal" evidence="5">
    <location>
        <begin position="1240"/>
        <end position="1387"/>
    </location>
</feature>
<feature type="region of interest" description="Disordered" evidence="7">
    <location>
        <begin position="1"/>
        <end position="45"/>
    </location>
</feature>
<feature type="region of interest" description="Disordered" evidence="7">
    <location>
        <begin position="85"/>
        <end position="113"/>
    </location>
</feature>
<feature type="region of interest" description="Disordered" evidence="7">
    <location>
        <begin position="230"/>
        <end position="414"/>
    </location>
</feature>
<feature type="coiled-coil region" evidence="3">
    <location>
        <begin position="480"/>
        <end position="551"/>
    </location>
</feature>
<feature type="short sequence motif" description="DEAQ box">
    <location>
        <begin position="807"/>
        <end position="810"/>
    </location>
</feature>
<feature type="compositionally biased region" description="Polar residues" evidence="7">
    <location>
        <begin position="1"/>
        <end position="24"/>
    </location>
</feature>
<feature type="compositionally biased region" description="Polar residues" evidence="7">
    <location>
        <begin position="90"/>
        <end position="113"/>
    </location>
</feature>
<feature type="compositionally biased region" description="Basic residues" evidence="7">
    <location>
        <begin position="241"/>
        <end position="257"/>
    </location>
</feature>
<feature type="compositionally biased region" description="Low complexity" evidence="7">
    <location>
        <begin position="283"/>
        <end position="295"/>
    </location>
</feature>
<feature type="compositionally biased region" description="Basic and acidic residues" evidence="7">
    <location>
        <begin position="360"/>
        <end position="382"/>
    </location>
</feature>
<feature type="compositionally biased region" description="Acidic residues" evidence="7">
    <location>
        <begin position="390"/>
        <end position="401"/>
    </location>
</feature>
<feature type="binding site" evidence="4">
    <location>
        <begin position="697"/>
        <end position="704"/>
    </location>
    <ligand>
        <name>ATP</name>
        <dbReference type="ChEBI" id="CHEBI:30616"/>
    </ligand>
</feature>
<protein>
    <recommendedName>
        <fullName evidence="1">Chromatin-remodeling ATPase INO80</fullName>
        <ecNumber evidence="1">3.6.4.-</ecNumber>
    </recommendedName>
</protein>
<keyword id="KW-0010">Activator</keyword>
<keyword id="KW-0067">ATP-binding</keyword>
<keyword id="KW-0175">Coiled coil</keyword>
<keyword id="KW-0227">DNA damage</keyword>
<keyword id="KW-0234">DNA repair</keyword>
<keyword id="KW-0238">DNA-binding</keyword>
<keyword id="KW-0378">Hydrolase</keyword>
<keyword id="KW-0547">Nucleotide-binding</keyword>
<keyword id="KW-0539">Nucleus</keyword>
<keyword id="KW-1185">Reference proteome</keyword>
<keyword id="KW-0804">Transcription</keyword>
<keyword id="KW-0805">Transcription regulation</keyword>
<dbReference type="EC" id="3.6.4.-" evidence="1"/>
<dbReference type="EMBL" id="CP017630">
    <property type="protein sequence ID" value="AOW31205.1"/>
    <property type="molecule type" value="Genomic_DNA"/>
</dbReference>
<dbReference type="RefSeq" id="XP_710254.2">
    <property type="nucleotide sequence ID" value="XM_705162.2"/>
</dbReference>
<dbReference type="SMR" id="Q59KI4"/>
<dbReference type="FunCoup" id="Q59KI4">
    <property type="interactions" value="1151"/>
</dbReference>
<dbReference type="STRING" id="237561.Q59KI4"/>
<dbReference type="EnsemblFungi" id="CR_04720C_A-T">
    <property type="protein sequence ID" value="CR_04720C_A-T-p1"/>
    <property type="gene ID" value="CR_04720C_A"/>
</dbReference>
<dbReference type="GeneID" id="3648140"/>
<dbReference type="KEGG" id="cal:CAALFM_CR04720CA"/>
<dbReference type="CGD" id="CAL0000196418">
    <property type="gene designation" value="INO80"/>
</dbReference>
<dbReference type="VEuPathDB" id="FungiDB:CR_04720C_A"/>
<dbReference type="eggNOG" id="KOG0388">
    <property type="taxonomic scope" value="Eukaryota"/>
</dbReference>
<dbReference type="HOGENOM" id="CLU_000315_26_2_1"/>
<dbReference type="InParanoid" id="Q59KI4"/>
<dbReference type="OrthoDB" id="372624at2759"/>
<dbReference type="PHI-base" id="PHI:123148"/>
<dbReference type="PRO" id="PR:Q59KI4"/>
<dbReference type="Proteomes" id="UP000000559">
    <property type="component" value="Chromosome R"/>
</dbReference>
<dbReference type="GO" id="GO:0000775">
    <property type="term" value="C:chromosome, centromeric region"/>
    <property type="evidence" value="ECO:0007669"/>
    <property type="project" value="EnsemblFungi"/>
</dbReference>
<dbReference type="GO" id="GO:0000781">
    <property type="term" value="C:chromosome, telomeric region"/>
    <property type="evidence" value="ECO:0007669"/>
    <property type="project" value="GOC"/>
</dbReference>
<dbReference type="GO" id="GO:0031011">
    <property type="term" value="C:Ino80 complex"/>
    <property type="evidence" value="ECO:0000314"/>
    <property type="project" value="CGD"/>
</dbReference>
<dbReference type="GO" id="GO:0005524">
    <property type="term" value="F:ATP binding"/>
    <property type="evidence" value="ECO:0007669"/>
    <property type="project" value="UniProtKB-KW"/>
</dbReference>
<dbReference type="GO" id="GO:0016887">
    <property type="term" value="F:ATP hydrolysis activity"/>
    <property type="evidence" value="ECO:0000318"/>
    <property type="project" value="GO_Central"/>
</dbReference>
<dbReference type="GO" id="GO:0003677">
    <property type="term" value="F:DNA binding"/>
    <property type="evidence" value="ECO:0007669"/>
    <property type="project" value="UniProtKB-KW"/>
</dbReference>
<dbReference type="GO" id="GO:0042393">
    <property type="term" value="F:histone binding"/>
    <property type="evidence" value="ECO:0000318"/>
    <property type="project" value="GO_Central"/>
</dbReference>
<dbReference type="GO" id="GO:0034080">
    <property type="term" value="P:CENP-A containing chromatin assembly"/>
    <property type="evidence" value="ECO:0007669"/>
    <property type="project" value="EnsemblFungi"/>
</dbReference>
<dbReference type="GO" id="GO:0006338">
    <property type="term" value="P:chromatin remodeling"/>
    <property type="evidence" value="ECO:0000318"/>
    <property type="project" value="GO_Central"/>
</dbReference>
<dbReference type="GO" id="GO:0006281">
    <property type="term" value="P:DNA repair"/>
    <property type="evidence" value="ECO:0000318"/>
    <property type="project" value="GO_Central"/>
</dbReference>
<dbReference type="GO" id="GO:1900430">
    <property type="term" value="P:positive regulation of filamentous growth of a population of unicellular organisms"/>
    <property type="evidence" value="ECO:0000315"/>
    <property type="project" value="CGD"/>
</dbReference>
<dbReference type="GO" id="GO:0045944">
    <property type="term" value="P:positive regulation of transcription by RNA polymerase II"/>
    <property type="evidence" value="ECO:0007669"/>
    <property type="project" value="EnsemblFungi"/>
</dbReference>
<dbReference type="GO" id="GO:0032006">
    <property type="term" value="P:regulation of TOR signaling"/>
    <property type="evidence" value="ECO:0007669"/>
    <property type="project" value="EnsemblFungi"/>
</dbReference>
<dbReference type="GO" id="GO:0031509">
    <property type="term" value="P:subtelomeric heterochromatin formation"/>
    <property type="evidence" value="ECO:0007669"/>
    <property type="project" value="EnsemblFungi"/>
</dbReference>
<dbReference type="GO" id="GO:0000722">
    <property type="term" value="P:telomere maintenance via recombination"/>
    <property type="evidence" value="ECO:0007669"/>
    <property type="project" value="EnsemblFungi"/>
</dbReference>
<dbReference type="GO" id="GO:0006366">
    <property type="term" value="P:transcription by RNA polymerase II"/>
    <property type="evidence" value="ECO:0007669"/>
    <property type="project" value="EnsemblFungi"/>
</dbReference>
<dbReference type="CDD" id="cd18793">
    <property type="entry name" value="SF2_C_SNF"/>
    <property type="match status" value="1"/>
</dbReference>
<dbReference type="FunFam" id="3.40.50.10810:FF:000022">
    <property type="entry name" value="Blast:Putative DNA helicase Ino80"/>
    <property type="match status" value="1"/>
</dbReference>
<dbReference type="FunFam" id="3.40.50.300:FF:003822">
    <property type="entry name" value="Chromatin-remodeling ATPase INO80"/>
    <property type="match status" value="1"/>
</dbReference>
<dbReference type="Gene3D" id="3.40.50.300">
    <property type="entry name" value="P-loop containing nucleotide triphosphate hydrolases"/>
    <property type="match status" value="1"/>
</dbReference>
<dbReference type="Gene3D" id="3.40.50.10810">
    <property type="entry name" value="Tandem AAA-ATPase domain"/>
    <property type="match status" value="1"/>
</dbReference>
<dbReference type="InterPro" id="IPR020838">
    <property type="entry name" value="DBINO"/>
</dbReference>
<dbReference type="InterPro" id="IPR014001">
    <property type="entry name" value="Helicase_ATP-bd"/>
</dbReference>
<dbReference type="InterPro" id="IPR001650">
    <property type="entry name" value="Helicase_C-like"/>
</dbReference>
<dbReference type="InterPro" id="IPR050520">
    <property type="entry name" value="INO80/SWR1_helicase"/>
</dbReference>
<dbReference type="InterPro" id="IPR027417">
    <property type="entry name" value="P-loop_NTPase"/>
</dbReference>
<dbReference type="InterPro" id="IPR038718">
    <property type="entry name" value="SNF2-like_sf"/>
</dbReference>
<dbReference type="InterPro" id="IPR049730">
    <property type="entry name" value="SNF2/RAD54-like_C"/>
</dbReference>
<dbReference type="InterPro" id="IPR000330">
    <property type="entry name" value="SNF2_N"/>
</dbReference>
<dbReference type="PANTHER" id="PTHR45685:SF2">
    <property type="entry name" value="CHROMATIN-REMODELING ATPASE INO80"/>
    <property type="match status" value="1"/>
</dbReference>
<dbReference type="PANTHER" id="PTHR45685">
    <property type="entry name" value="HELICASE SRCAP-RELATED"/>
    <property type="match status" value="1"/>
</dbReference>
<dbReference type="Pfam" id="PF13892">
    <property type="entry name" value="DBINO"/>
    <property type="match status" value="1"/>
</dbReference>
<dbReference type="Pfam" id="PF00271">
    <property type="entry name" value="Helicase_C"/>
    <property type="match status" value="1"/>
</dbReference>
<dbReference type="Pfam" id="PF00176">
    <property type="entry name" value="SNF2-rel_dom"/>
    <property type="match status" value="1"/>
</dbReference>
<dbReference type="SMART" id="SM00487">
    <property type="entry name" value="DEXDc"/>
    <property type="match status" value="1"/>
</dbReference>
<dbReference type="SMART" id="SM00490">
    <property type="entry name" value="HELICc"/>
    <property type="match status" value="1"/>
</dbReference>
<dbReference type="SUPFAM" id="SSF52540">
    <property type="entry name" value="P-loop containing nucleoside triphosphate hydrolases"/>
    <property type="match status" value="2"/>
</dbReference>
<dbReference type="PROSITE" id="PS51413">
    <property type="entry name" value="DBINO"/>
    <property type="match status" value="1"/>
</dbReference>
<dbReference type="PROSITE" id="PS51192">
    <property type="entry name" value="HELICASE_ATP_BIND_1"/>
    <property type="match status" value="1"/>
</dbReference>
<dbReference type="PROSITE" id="PS51194">
    <property type="entry name" value="HELICASE_CTER"/>
    <property type="match status" value="1"/>
</dbReference>
<proteinExistence type="inferred from homology"/>
<evidence type="ECO:0000250" key="1">
    <source>
        <dbReference type="UniProtKB" id="P53115"/>
    </source>
</evidence>
<evidence type="ECO:0000250" key="2">
    <source>
        <dbReference type="UniProtKB" id="Q9ULG1"/>
    </source>
</evidence>
<evidence type="ECO:0000255" key="3"/>
<evidence type="ECO:0000255" key="4">
    <source>
        <dbReference type="PROSITE-ProRule" id="PRU00541"/>
    </source>
</evidence>
<evidence type="ECO:0000255" key="5">
    <source>
        <dbReference type="PROSITE-ProRule" id="PRU00542"/>
    </source>
</evidence>
<evidence type="ECO:0000255" key="6">
    <source>
        <dbReference type="PROSITE-ProRule" id="PRU00746"/>
    </source>
</evidence>
<evidence type="ECO:0000256" key="7">
    <source>
        <dbReference type="SAM" id="MobiDB-lite"/>
    </source>
</evidence>
<evidence type="ECO:0000305" key="8"/>
<accession>Q59KI4</accession>
<accession>A0A1D8PSU8</accession>
<name>INO80_CANAL</name>
<organism>
    <name type="scientific">Candida albicans (strain SC5314 / ATCC MYA-2876)</name>
    <name type="common">Yeast</name>
    <dbReference type="NCBI Taxonomy" id="237561"/>
    <lineage>
        <taxon>Eukaryota</taxon>
        <taxon>Fungi</taxon>
        <taxon>Dikarya</taxon>
        <taxon>Ascomycota</taxon>
        <taxon>Saccharomycotina</taxon>
        <taxon>Pichiomycetes</taxon>
        <taxon>Debaryomycetaceae</taxon>
        <taxon>Candida/Lodderomyces clade</taxon>
        <taxon>Candida</taxon>
    </lineage>
</organism>
<comment type="function">
    <text evidence="6">ATPase component of the INO80 complex which remodels chromatin by shifting nucleosomes and is involved in DNA repair.</text>
</comment>
<comment type="catalytic activity">
    <reaction evidence="1">
        <text>ATP + H2O = ADP + phosphate + H(+)</text>
        <dbReference type="Rhea" id="RHEA:13065"/>
        <dbReference type="ChEBI" id="CHEBI:15377"/>
        <dbReference type="ChEBI" id="CHEBI:15378"/>
        <dbReference type="ChEBI" id="CHEBI:30616"/>
        <dbReference type="ChEBI" id="CHEBI:43474"/>
        <dbReference type="ChEBI" id="CHEBI:456216"/>
    </reaction>
</comment>
<comment type="subunit">
    <text evidence="6">Component of the INO80 chromatin-remodeling complex.</text>
</comment>
<comment type="subcellular location">
    <subcellularLocation>
        <location evidence="6">Nucleus</location>
    </subcellularLocation>
</comment>
<comment type="domain">
    <text evidence="2">The DBINO region is involved in binding to DNA.</text>
</comment>
<comment type="similarity">
    <text evidence="8">Belongs to the SNF2/RAD54 helicase family.</text>
</comment>
<reference key="1">
    <citation type="journal article" date="2004" name="Proc. Natl. Acad. Sci. U.S.A.">
        <title>The diploid genome sequence of Candida albicans.</title>
        <authorList>
            <person name="Jones T."/>
            <person name="Federspiel N.A."/>
            <person name="Chibana H."/>
            <person name="Dungan J."/>
            <person name="Kalman S."/>
            <person name="Magee B.B."/>
            <person name="Newport G."/>
            <person name="Thorstenson Y.R."/>
            <person name="Agabian N."/>
            <person name="Magee P.T."/>
            <person name="Davis R.W."/>
            <person name="Scherer S."/>
        </authorList>
    </citation>
    <scope>NUCLEOTIDE SEQUENCE [LARGE SCALE GENOMIC DNA]</scope>
    <source>
        <strain>SC5314 / ATCC MYA-2876</strain>
    </source>
</reference>
<reference key="2">
    <citation type="journal article" date="2007" name="Genome Biol.">
        <title>Assembly of the Candida albicans genome into sixteen supercontigs aligned on the eight chromosomes.</title>
        <authorList>
            <person name="van het Hoog M."/>
            <person name="Rast T.J."/>
            <person name="Martchenko M."/>
            <person name="Grindle S."/>
            <person name="Dignard D."/>
            <person name="Hogues H."/>
            <person name="Cuomo C."/>
            <person name="Berriman M."/>
            <person name="Scherer S."/>
            <person name="Magee B.B."/>
            <person name="Whiteway M."/>
            <person name="Chibana H."/>
            <person name="Nantel A."/>
            <person name="Magee P.T."/>
        </authorList>
    </citation>
    <scope>GENOME REANNOTATION</scope>
    <source>
        <strain>SC5314 / ATCC MYA-2876</strain>
    </source>
</reference>
<reference key="3">
    <citation type="journal article" date="2013" name="Genome Biol.">
        <title>Assembly of a phased diploid Candida albicans genome facilitates allele-specific measurements and provides a simple model for repeat and indel structure.</title>
        <authorList>
            <person name="Muzzey D."/>
            <person name="Schwartz K."/>
            <person name="Weissman J.S."/>
            <person name="Sherlock G."/>
        </authorList>
    </citation>
    <scope>NUCLEOTIDE SEQUENCE [LARGE SCALE GENOMIC DNA]</scope>
    <scope>GENOME REANNOTATION</scope>
    <source>
        <strain>SC5314 / ATCC MYA-2876</strain>
    </source>
</reference>